<organism>
    <name type="scientific">Mus musculus</name>
    <name type="common">Mouse</name>
    <dbReference type="NCBI Taxonomy" id="10090"/>
    <lineage>
        <taxon>Eukaryota</taxon>
        <taxon>Metazoa</taxon>
        <taxon>Chordata</taxon>
        <taxon>Craniata</taxon>
        <taxon>Vertebrata</taxon>
        <taxon>Euteleostomi</taxon>
        <taxon>Mammalia</taxon>
        <taxon>Eutheria</taxon>
        <taxon>Euarchontoglires</taxon>
        <taxon>Glires</taxon>
        <taxon>Rodentia</taxon>
        <taxon>Myomorpha</taxon>
        <taxon>Muroidea</taxon>
        <taxon>Muridae</taxon>
        <taxon>Murinae</taxon>
        <taxon>Mus</taxon>
        <taxon>Mus</taxon>
    </lineage>
</organism>
<dbReference type="EC" id="2.7.10.1"/>
<dbReference type="EMBL" id="Y00671">
    <property type="protein sequence ID" value="CAA68680.1"/>
    <property type="molecule type" value="mRNA"/>
</dbReference>
<dbReference type="EMBL" id="M33424">
    <property type="protein sequence ID" value="AAA40015.1"/>
    <property type="molecule type" value="mRNA"/>
</dbReference>
<dbReference type="CCDS" id="CCDS19925.1"/>
<dbReference type="PIR" id="S01254">
    <property type="entry name" value="S01254"/>
</dbReference>
<dbReference type="SASBDB" id="P16056"/>
<dbReference type="SMR" id="P16056"/>
<dbReference type="FunCoup" id="P16056">
    <property type="interactions" value="153"/>
</dbReference>
<dbReference type="IntAct" id="P16056">
    <property type="interactions" value="145"/>
</dbReference>
<dbReference type="MINT" id="P16056"/>
<dbReference type="STRING" id="10090.ENSMUSP00000111103"/>
<dbReference type="BindingDB" id="P16056"/>
<dbReference type="ChEMBL" id="CHEMBL5585"/>
<dbReference type="GlyCosmos" id="P16056">
    <property type="glycosylation" value="10 sites, No reported glycans"/>
</dbReference>
<dbReference type="GlyGen" id="P16056">
    <property type="glycosylation" value="14 sites, 5 N-linked glycans (5 sites)"/>
</dbReference>
<dbReference type="iPTMnet" id="P16056"/>
<dbReference type="PhosphoSitePlus" id="P16056"/>
<dbReference type="SwissPalm" id="P16056"/>
<dbReference type="PaxDb" id="10090-ENSMUSP00000111103"/>
<dbReference type="PeptideAtlas" id="P16056"/>
<dbReference type="ProteomicsDB" id="295888"/>
<dbReference type="Pumba" id="P16056"/>
<dbReference type="ABCD" id="P16056">
    <property type="antibodies" value="17 sequenced antibodies"/>
</dbReference>
<dbReference type="AGR" id="MGI:96969"/>
<dbReference type="MGI" id="MGI:96969">
    <property type="gene designation" value="Met"/>
</dbReference>
<dbReference type="eggNOG" id="KOG1095">
    <property type="taxonomic scope" value="Eukaryota"/>
</dbReference>
<dbReference type="eggNOG" id="KOG3610">
    <property type="taxonomic scope" value="Eukaryota"/>
</dbReference>
<dbReference type="InParanoid" id="P16056"/>
<dbReference type="PhylomeDB" id="P16056"/>
<dbReference type="BRENDA" id="2.7.10.1">
    <property type="organism ID" value="3474"/>
</dbReference>
<dbReference type="Reactome" id="R-MMU-1257604">
    <property type="pathway name" value="PIP3 activates AKT signaling"/>
</dbReference>
<dbReference type="Reactome" id="R-MMU-416550">
    <property type="pathway name" value="Sema4D mediated inhibition of cell attachment and migration"/>
</dbReference>
<dbReference type="Reactome" id="R-MMU-5673001">
    <property type="pathway name" value="RAF/MAP kinase cascade"/>
</dbReference>
<dbReference type="Reactome" id="R-MMU-6806942">
    <property type="pathway name" value="MET Receptor Activation"/>
</dbReference>
<dbReference type="Reactome" id="R-MMU-6807004">
    <property type="pathway name" value="Negative regulation of MET activity"/>
</dbReference>
<dbReference type="Reactome" id="R-MMU-6811558">
    <property type="pathway name" value="PI5P, PP2A and IER3 Regulate PI3K/AKT Signaling"/>
</dbReference>
<dbReference type="Reactome" id="R-MMU-8851805">
    <property type="pathway name" value="MET activates RAS signaling"/>
</dbReference>
<dbReference type="Reactome" id="R-MMU-8851907">
    <property type="pathway name" value="MET activates PI3K/AKT signaling"/>
</dbReference>
<dbReference type="Reactome" id="R-MMU-8865999">
    <property type="pathway name" value="MET activates PTPN11"/>
</dbReference>
<dbReference type="Reactome" id="R-MMU-8874081">
    <property type="pathway name" value="MET activates PTK2 signaling"/>
</dbReference>
<dbReference type="Reactome" id="R-MMU-8875513">
    <property type="pathway name" value="MET interacts with TNS proteins"/>
</dbReference>
<dbReference type="Reactome" id="R-MMU-8875555">
    <property type="pathway name" value="MET activates RAP1 and RAC1"/>
</dbReference>
<dbReference type="Reactome" id="R-MMU-8875656">
    <property type="pathway name" value="MET receptor recycling"/>
</dbReference>
<dbReference type="Reactome" id="R-MMU-8875791">
    <property type="pathway name" value="MET activates STAT3"/>
</dbReference>
<dbReference type="Reactome" id="R-MMU-9734091">
    <property type="pathway name" value="Drug-mediated inhibition of MET activation"/>
</dbReference>
<dbReference type="ChiTaRS" id="Met">
    <property type="organism name" value="mouse"/>
</dbReference>
<dbReference type="PRO" id="PR:P16056"/>
<dbReference type="Proteomes" id="UP000000589">
    <property type="component" value="Unplaced"/>
</dbReference>
<dbReference type="RNAct" id="P16056">
    <property type="molecule type" value="protein"/>
</dbReference>
<dbReference type="GO" id="GO:0009925">
    <property type="term" value="C:basal plasma membrane"/>
    <property type="evidence" value="ECO:0000266"/>
    <property type="project" value="MGI"/>
</dbReference>
<dbReference type="GO" id="GO:0016020">
    <property type="term" value="C:membrane"/>
    <property type="evidence" value="ECO:0000314"/>
    <property type="project" value="MGI"/>
</dbReference>
<dbReference type="GO" id="GO:0098794">
    <property type="term" value="C:postsynapse"/>
    <property type="evidence" value="ECO:0007669"/>
    <property type="project" value="GOC"/>
</dbReference>
<dbReference type="GO" id="GO:0005524">
    <property type="term" value="F:ATP binding"/>
    <property type="evidence" value="ECO:0007669"/>
    <property type="project" value="UniProtKB-KW"/>
</dbReference>
<dbReference type="GO" id="GO:0005008">
    <property type="term" value="F:hepatocyte growth factor receptor activity"/>
    <property type="evidence" value="ECO:0000314"/>
    <property type="project" value="MGI"/>
</dbReference>
<dbReference type="GO" id="GO:0004672">
    <property type="term" value="F:protein kinase activity"/>
    <property type="evidence" value="ECO:0000314"/>
    <property type="project" value="MGI"/>
</dbReference>
<dbReference type="GO" id="GO:0017154">
    <property type="term" value="F:semaphorin receptor activity"/>
    <property type="evidence" value="ECO:0007669"/>
    <property type="project" value="InterPro"/>
</dbReference>
<dbReference type="GO" id="GO:0030534">
    <property type="term" value="P:adult behavior"/>
    <property type="evidence" value="ECO:0000315"/>
    <property type="project" value="MGI"/>
</dbReference>
<dbReference type="GO" id="GO:0007420">
    <property type="term" value="P:brain development"/>
    <property type="evidence" value="ECO:0000315"/>
    <property type="project" value="MGI"/>
</dbReference>
<dbReference type="GO" id="GO:0055013">
    <property type="term" value="P:cardiac muscle cell development"/>
    <property type="evidence" value="ECO:0000315"/>
    <property type="project" value="MGI"/>
</dbReference>
<dbReference type="GO" id="GO:0060048">
    <property type="term" value="P:cardiac muscle contraction"/>
    <property type="evidence" value="ECO:0000315"/>
    <property type="project" value="MGI"/>
</dbReference>
<dbReference type="GO" id="GO:0007268">
    <property type="term" value="P:chemical synaptic transmission"/>
    <property type="evidence" value="ECO:0000315"/>
    <property type="project" value="CACAO"/>
</dbReference>
<dbReference type="GO" id="GO:1904659">
    <property type="term" value="P:D-glucose transmembrane transport"/>
    <property type="evidence" value="ECO:0000315"/>
    <property type="project" value="MGI"/>
</dbReference>
<dbReference type="GO" id="GO:0051649">
    <property type="term" value="P:establishment of localization in cell"/>
    <property type="evidence" value="ECO:0000315"/>
    <property type="project" value="MGI"/>
</dbReference>
<dbReference type="GO" id="GO:0060079">
    <property type="term" value="P:excitatory postsynaptic potential"/>
    <property type="evidence" value="ECO:0000315"/>
    <property type="project" value="BHF-UCL"/>
</dbReference>
<dbReference type="GO" id="GO:0042593">
    <property type="term" value="P:glucose homeostasis"/>
    <property type="evidence" value="ECO:0000315"/>
    <property type="project" value="MGI"/>
</dbReference>
<dbReference type="GO" id="GO:0048012">
    <property type="term" value="P:hepatocyte growth factor receptor signaling pathway"/>
    <property type="evidence" value="ECO:0000314"/>
    <property type="project" value="MGI"/>
</dbReference>
<dbReference type="GO" id="GO:0001889">
    <property type="term" value="P:liver development"/>
    <property type="evidence" value="ECO:0000315"/>
    <property type="project" value="MGI"/>
</dbReference>
<dbReference type="GO" id="GO:0050804">
    <property type="term" value="P:modulation of chemical synaptic transmission"/>
    <property type="evidence" value="ECO:0000315"/>
    <property type="project" value="BHF-UCL"/>
</dbReference>
<dbReference type="GO" id="GO:0014812">
    <property type="term" value="P:muscle cell migration"/>
    <property type="evidence" value="ECO:0000315"/>
    <property type="project" value="MGI"/>
</dbReference>
<dbReference type="GO" id="GO:0007517">
    <property type="term" value="P:muscle organ development"/>
    <property type="evidence" value="ECO:0000315"/>
    <property type="project" value="MGI"/>
</dbReference>
<dbReference type="GO" id="GO:0051450">
    <property type="term" value="P:myoblast proliferation"/>
    <property type="evidence" value="ECO:0000315"/>
    <property type="project" value="MGI"/>
</dbReference>
<dbReference type="GO" id="GO:0014902">
    <property type="term" value="P:myotube differentiation"/>
    <property type="evidence" value="ECO:0000315"/>
    <property type="project" value="MGI"/>
</dbReference>
<dbReference type="GO" id="GO:0010629">
    <property type="term" value="P:negative regulation of gene expression"/>
    <property type="evidence" value="ECO:0000315"/>
    <property type="project" value="MGI"/>
</dbReference>
<dbReference type="GO" id="GO:0071635">
    <property type="term" value="P:negative regulation of transforming growth factor beta production"/>
    <property type="evidence" value="ECO:0000315"/>
    <property type="project" value="MGI"/>
</dbReference>
<dbReference type="GO" id="GO:0001890">
    <property type="term" value="P:placenta development"/>
    <property type="evidence" value="ECO:0000315"/>
    <property type="project" value="MGI"/>
</dbReference>
<dbReference type="GO" id="GO:0050918">
    <property type="term" value="P:positive chemotaxis"/>
    <property type="evidence" value="ECO:0000315"/>
    <property type="project" value="UniProtKB"/>
</dbReference>
<dbReference type="GO" id="GO:0010828">
    <property type="term" value="P:positive regulation of D-glucose transmembrane transport"/>
    <property type="evidence" value="ECO:0000315"/>
    <property type="project" value="MGI"/>
</dbReference>
<dbReference type="GO" id="GO:2001028">
    <property type="term" value="P:positive regulation of endothelial cell chemotaxis"/>
    <property type="evidence" value="ECO:0000250"/>
    <property type="project" value="UniProtKB"/>
</dbReference>
<dbReference type="GO" id="GO:0043410">
    <property type="term" value="P:positive regulation of MAPK cascade"/>
    <property type="evidence" value="ECO:0000353"/>
    <property type="project" value="MGI"/>
</dbReference>
<dbReference type="GO" id="GO:1900745">
    <property type="term" value="P:positive regulation of p38MAPK cascade"/>
    <property type="evidence" value="ECO:0000315"/>
    <property type="project" value="MGI"/>
</dbReference>
<dbReference type="GO" id="GO:0072593">
    <property type="term" value="P:reactive oxygen species metabolic process"/>
    <property type="evidence" value="ECO:0000315"/>
    <property type="project" value="MGI"/>
</dbReference>
<dbReference type="GO" id="GO:0060665">
    <property type="term" value="P:regulation of branching involved in salivary gland morphogenesis by mesenchymal-epithelial signaling"/>
    <property type="evidence" value="ECO:0000315"/>
    <property type="project" value="MGI"/>
</dbReference>
<dbReference type="GO" id="GO:1900407">
    <property type="term" value="P:regulation of cellular response to oxidative stress"/>
    <property type="evidence" value="ECO:0000315"/>
    <property type="project" value="MGI"/>
</dbReference>
<dbReference type="GO" id="GO:0032675">
    <property type="term" value="P:regulation of interleukin-6 production"/>
    <property type="evidence" value="ECO:0000315"/>
    <property type="project" value="MGI"/>
</dbReference>
<dbReference type="GO" id="GO:0071526">
    <property type="term" value="P:semaphorin-plexin signaling pathway"/>
    <property type="evidence" value="ECO:0000315"/>
    <property type="project" value="UniProtKB"/>
</dbReference>
<dbReference type="GO" id="GO:0007519">
    <property type="term" value="P:skeletal muscle tissue development"/>
    <property type="evidence" value="ECO:0000315"/>
    <property type="project" value="MGI"/>
</dbReference>
<dbReference type="CDD" id="cd00603">
    <property type="entry name" value="IPT_PCSR"/>
    <property type="match status" value="1"/>
</dbReference>
<dbReference type="CDD" id="cd01180">
    <property type="entry name" value="IPT_plexin_repeat1"/>
    <property type="match status" value="1"/>
</dbReference>
<dbReference type="CDD" id="cd01179">
    <property type="entry name" value="IPT_plexin_repeat2"/>
    <property type="match status" value="1"/>
</dbReference>
<dbReference type="CDD" id="cd05058">
    <property type="entry name" value="PTKc_Met_Ron"/>
    <property type="match status" value="1"/>
</dbReference>
<dbReference type="FunFam" id="1.10.510.10:FF:000093">
    <property type="entry name" value="Hepatocyte growth factor receptor"/>
    <property type="match status" value="1"/>
</dbReference>
<dbReference type="FunFam" id="2.130.10.10:FF:000088">
    <property type="entry name" value="Hepatocyte growth factor receptor"/>
    <property type="match status" value="1"/>
</dbReference>
<dbReference type="FunFam" id="2.60.40.10:FF:000213">
    <property type="entry name" value="Hepatocyte growth factor receptor"/>
    <property type="match status" value="1"/>
</dbReference>
<dbReference type="FunFam" id="2.60.40.10:FF:000400">
    <property type="entry name" value="Hepatocyte growth factor receptor"/>
    <property type="match status" value="1"/>
</dbReference>
<dbReference type="FunFam" id="2.60.40.10:FF:002708">
    <property type="entry name" value="Hepatocyte growth factor receptor"/>
    <property type="match status" value="1"/>
</dbReference>
<dbReference type="FunFam" id="3.30.200.20:FF:000188">
    <property type="entry name" value="Hepatocyte growth factor receptor"/>
    <property type="match status" value="1"/>
</dbReference>
<dbReference type="FunFam" id="3.30.1680.10:FF:000006">
    <property type="entry name" value="Macrophage-stimulating 1 receptor b"/>
    <property type="match status" value="1"/>
</dbReference>
<dbReference type="Gene3D" id="2.60.40.10">
    <property type="entry name" value="Immunoglobulins"/>
    <property type="match status" value="2"/>
</dbReference>
<dbReference type="Gene3D" id="3.30.200.20">
    <property type="entry name" value="Phosphorylase Kinase, domain 1"/>
    <property type="match status" value="1"/>
</dbReference>
<dbReference type="Gene3D" id="1.10.510.10">
    <property type="entry name" value="Transferase(Phosphotransferase) domain 1"/>
    <property type="match status" value="1"/>
</dbReference>
<dbReference type="Gene3D" id="2.130.10.10">
    <property type="entry name" value="YVTN repeat-like/Quinoprotein amine dehydrogenase"/>
    <property type="match status" value="1"/>
</dbReference>
<dbReference type="InterPro" id="IPR013783">
    <property type="entry name" value="Ig-like_fold"/>
</dbReference>
<dbReference type="InterPro" id="IPR014756">
    <property type="entry name" value="Ig_E-set"/>
</dbReference>
<dbReference type="InterPro" id="IPR002909">
    <property type="entry name" value="IPT_dom"/>
</dbReference>
<dbReference type="InterPro" id="IPR011009">
    <property type="entry name" value="Kinase-like_dom_sf"/>
</dbReference>
<dbReference type="InterPro" id="IPR031148">
    <property type="entry name" value="Plexin"/>
</dbReference>
<dbReference type="InterPro" id="IPR002165">
    <property type="entry name" value="Plexin_repeat"/>
</dbReference>
<dbReference type="InterPro" id="IPR000719">
    <property type="entry name" value="Prot_kinase_dom"/>
</dbReference>
<dbReference type="InterPro" id="IPR017441">
    <property type="entry name" value="Protein_kinase_ATP_BS"/>
</dbReference>
<dbReference type="InterPro" id="IPR016201">
    <property type="entry name" value="PSI"/>
</dbReference>
<dbReference type="InterPro" id="IPR001627">
    <property type="entry name" value="Semap_dom"/>
</dbReference>
<dbReference type="InterPro" id="IPR036352">
    <property type="entry name" value="Semap_dom_sf"/>
</dbReference>
<dbReference type="InterPro" id="IPR001245">
    <property type="entry name" value="Ser-Thr/Tyr_kinase_cat_dom"/>
</dbReference>
<dbReference type="InterPro" id="IPR008266">
    <property type="entry name" value="Tyr_kinase_AS"/>
</dbReference>
<dbReference type="InterPro" id="IPR020635">
    <property type="entry name" value="Tyr_kinase_cat_dom"/>
</dbReference>
<dbReference type="InterPro" id="IPR016244">
    <property type="entry name" value="Tyr_kinase_HGF/MSP_rcpt"/>
</dbReference>
<dbReference type="InterPro" id="IPR015943">
    <property type="entry name" value="WD40/YVTN_repeat-like_dom_sf"/>
</dbReference>
<dbReference type="PANTHER" id="PTHR22625:SF61">
    <property type="entry name" value="HEPATOCYTE GROWTH FACTOR RECEPTOR"/>
    <property type="match status" value="1"/>
</dbReference>
<dbReference type="PANTHER" id="PTHR22625">
    <property type="entry name" value="PLEXIN"/>
    <property type="match status" value="1"/>
</dbReference>
<dbReference type="Pfam" id="PF07714">
    <property type="entry name" value="PK_Tyr_Ser-Thr"/>
    <property type="match status" value="1"/>
</dbReference>
<dbReference type="Pfam" id="PF01437">
    <property type="entry name" value="PSI"/>
    <property type="match status" value="1"/>
</dbReference>
<dbReference type="Pfam" id="PF01403">
    <property type="entry name" value="Sema"/>
    <property type="match status" value="1"/>
</dbReference>
<dbReference type="Pfam" id="PF01833">
    <property type="entry name" value="TIG"/>
    <property type="match status" value="3"/>
</dbReference>
<dbReference type="PIRSF" id="PIRSF000617">
    <property type="entry name" value="TyrPK_HGF-R"/>
    <property type="match status" value="1"/>
</dbReference>
<dbReference type="PRINTS" id="PR00109">
    <property type="entry name" value="TYRKINASE"/>
</dbReference>
<dbReference type="SMART" id="SM00429">
    <property type="entry name" value="IPT"/>
    <property type="match status" value="4"/>
</dbReference>
<dbReference type="SMART" id="SM00423">
    <property type="entry name" value="PSI"/>
    <property type="match status" value="1"/>
</dbReference>
<dbReference type="SMART" id="SM00630">
    <property type="entry name" value="Sema"/>
    <property type="match status" value="1"/>
</dbReference>
<dbReference type="SMART" id="SM00219">
    <property type="entry name" value="TyrKc"/>
    <property type="match status" value="1"/>
</dbReference>
<dbReference type="SUPFAM" id="SSF81296">
    <property type="entry name" value="E set domains"/>
    <property type="match status" value="3"/>
</dbReference>
<dbReference type="SUPFAM" id="SSF103575">
    <property type="entry name" value="Plexin repeat"/>
    <property type="match status" value="1"/>
</dbReference>
<dbReference type="SUPFAM" id="SSF56112">
    <property type="entry name" value="Protein kinase-like (PK-like)"/>
    <property type="match status" value="1"/>
</dbReference>
<dbReference type="SUPFAM" id="SSF101912">
    <property type="entry name" value="Sema domain"/>
    <property type="match status" value="1"/>
</dbReference>
<dbReference type="PROSITE" id="PS00107">
    <property type="entry name" value="PROTEIN_KINASE_ATP"/>
    <property type="match status" value="1"/>
</dbReference>
<dbReference type="PROSITE" id="PS50011">
    <property type="entry name" value="PROTEIN_KINASE_DOM"/>
    <property type="match status" value="1"/>
</dbReference>
<dbReference type="PROSITE" id="PS00109">
    <property type="entry name" value="PROTEIN_KINASE_TYR"/>
    <property type="match status" value="1"/>
</dbReference>
<dbReference type="PROSITE" id="PS51004">
    <property type="entry name" value="SEMA"/>
    <property type="match status" value="1"/>
</dbReference>
<sequence>MKAPTVLAPGILVLLLSLVQRSHGECKEALVKSEMNVNMKYQLPNFTAETPIQNVVLHGHHIYLGATNYIYVLNDKDLQKVSEFKTGPVLEHPDCLPCRDCSSKANSSGGVWKDNINMALLVDTYYDDQLISCGSVNRGTCQRHVLPPDNSADIQSEVHCMFSPEEESGQCPDCVVSALGAKVLLSEKDRFINFFVGNTINSSYPPGYSLHSISVRRLKETQDGFKFLTDQSYIDVLPEFLDSYPIKYIHAFESNHFIYFLTVQKETLDAQTFHTRIIRFCSVDSGLHSYMEMPLECILTEKRRKRSTREEVFNILQAAYVSKPGANLAKQIGASPSDDILFGVFAQSKPDSAEPVNRSAVCAFPIKYVNDFFNKIVNKNNVRCLQHFYGPNHEHCFNRTLLRNSSGCEARSDEYRTEFTTALQRVDLFMGRLNQVLLTSISTFIKGDLTIANLGTSEGRFMQVVLSRTAHLTPHVNFLLDSHPVSPEVIVEHPSNQNGYTLVVTGKKITKIPLNGLGCGHFQSCSQCLSAPYFIQCGWCHNQCVRFDECPSGTWTQEICLPAVYKVFPTSAPLEGGTVLTICGWDFGFRKNNKFDLRKTKVLLGNESCTLTLSESTTNTLKCTVGPAMSEHFNVSVIISNSRETTQYSAFSYVDPVITSISPRYGPQAGGTLLTLTGKYLNSGNSRHISIGGKTCTLKSVSDSILECYTPAQTTSDEFPVKLKIDLANRETSSFSYREDPVVYEIHPTKSFISGGSTITGIGKTLNSVSLPKLVIDVHEVGVNYTVACQHRSNSEIICCTTPSLKQLGLQLPLKTKAFFLLDGILSKHFDLTYVHNPVFEPFEKPVMISMGNENVVEIKGNNIDPEAVKGEVLKVGNQSCESLHWHSGAVLCTVPSDLLKLNSELNIEWKQAVSSTVLGKVIVQPDQNFAGLIIGAVSISVVVLLLSGLFLWMRKRKHKDLGSELVRYDARVHTPHLDRLVSARSVSPTTEMVSNESVDYRATFPEDQFPNSSQNGACRQVQYPLTDLSPILTSGDSDISSPLLQNTVHIDLSALNPELVQAVQHVVIGPSSLIVHFNEVIGRGHFGCVYHGTLLDNDGKKIHCAVKSLNRITDIEEVSQFLTEGIIMKDFSHPNVLSLLGICLRSEGSPLVVLPYMKHGDLRNFIRNETHNPTVKDLIGFGLQVAKGMKYLASKKFVHRDLAARNCMLDEKFTVKVADFGLARDMYDKEYYSVHNKTGAKLPVKWMALESLQTQKFTTKSDVWSFGVLLWELMTRGAPPYPDVNTFDITIYLLQGRRLLQPEYCPDALYEVMLKCWHPKAEMRPSFSELVSRISSIFSTFIGEHYVHVNATYVNVKCVAPYPSLLPSQDNIDGEGNT</sequence>
<reference key="1">
    <citation type="journal article" date="1988" name="Oncogene">
        <title>Characterization of the mouse met proto-oncogene.</title>
        <authorList>
            <person name="Chan A.M.-L."/>
            <person name="King H.W.S."/>
            <person name="Deakin E.A."/>
            <person name="Tempest P.R."/>
            <person name="Hilkens J."/>
            <person name="Kroezen V."/>
            <person name="Edwards D.R."/>
            <person name="Wills A.J."/>
            <person name="Brookes P."/>
            <person name="Cooper C.S."/>
        </authorList>
    </citation>
    <scope>NUCLEOTIDE SEQUENCE [MRNA]</scope>
</reference>
<reference key="2">
    <citation type="journal article" date="1989" name="Gene">
        <title>The application of the polymerase chain reaction to cloning members of the protein tyrosine kinase family.</title>
        <authorList>
            <person name="Wilks A.F."/>
            <person name="Kurban R.R."/>
            <person name="Hovens C.M."/>
            <person name="Ralph S.J."/>
        </authorList>
    </citation>
    <scope>NUCLEOTIDE SEQUENCE [MRNA] OF 1199-1270</scope>
</reference>
<reference key="3">
    <citation type="journal article" date="1993" name="J. Cell Biol.">
        <title>The Met receptor tyrosine kinase transduces motility, proliferation, and morphogenic signals of scatter factor/hepatocyte growth factor in epithelial cells.</title>
        <authorList>
            <person name="Weidner K.M."/>
            <person name="Sachs M."/>
            <person name="Birchmeier W."/>
        </authorList>
    </citation>
    <scope>NUCLEOTIDE SEQUENCE [MRNA] OF 924-935</scope>
</reference>
<reference key="4">
    <citation type="journal article" date="1995" name="Nature">
        <title>Essential role for the c-met receptor in the migration of myogenic precursor cells into the limb bud.</title>
        <authorList>
            <person name="Bladt F."/>
            <person name="Riethmacher D."/>
            <person name="Isenmann S."/>
            <person name="Aguzzi A."/>
            <person name="Birchmeier C."/>
        </authorList>
    </citation>
    <scope>FUNCTION IN DEVELOPMENT</scope>
</reference>
<reference key="5">
    <citation type="journal article" date="2000" name="Cell">
        <title>InIB-dependent internalization of Listeria is mediated by the Met receptor tyrosine kinase.</title>
        <authorList>
            <person name="Shen Y."/>
            <person name="Naujokas M."/>
            <person name="Park M."/>
            <person name="Ireton K."/>
        </authorList>
    </citation>
    <scope>FUNCTION (MICROBIAL INFECTION)</scope>
    <scope>PHOSPHORYLATION (MICROBIAL INFECTION)</scope>
</reference>
<reference key="6">
    <citation type="journal article" date="2002" name="Oncogene">
        <title>The SH2-containing inositol 5-phosphatase (SHIP)-1 is implicated in the control of cell-cell junction and induces dissociation and dispersion of MDCK cells.</title>
        <authorList>
            <person name="Mancini A."/>
            <person name="Koch A."/>
            <person name="Wilms R."/>
            <person name="Tamura T."/>
        </authorList>
    </citation>
    <scope>INTERACTION WITH INPP5D</scope>
</reference>
<reference key="7">
    <citation type="journal article" date="2004" name="Mol. Cell. Biol.">
        <title>MUC20 suppresses the hepatocyte growth factor-induced Grb2-Ras pathway by binding to a multifunctional docking site of met.</title>
        <authorList>
            <person name="Higuchi T."/>
            <person name="Orita T."/>
            <person name="Katsuya K."/>
            <person name="Yamasaki Y."/>
            <person name="Akiyama K."/>
            <person name="Li H."/>
            <person name="Yamamoto T."/>
            <person name="Saito Y."/>
            <person name="Nakamura M."/>
        </authorList>
    </citation>
    <scope>INTERACTION WITH MUC20</scope>
</reference>
<reference key="8">
    <citation type="journal article" date="2006" name="Nat. Struct. Mol. Biol.">
        <title>The SPRY domain of SSB-2 adopts a novel fold that presents conserved Par-4-binding residues.</title>
        <authorList>
            <person name="Masters S.L."/>
            <person name="Yao S."/>
            <person name="Willson T.A."/>
            <person name="Zhang J.-G."/>
            <person name="Palmer K.R."/>
            <person name="Smith B.J."/>
            <person name="Babon J.J."/>
            <person name="Nicola N.A."/>
            <person name="Norton R.S."/>
            <person name="Nicholson S.E."/>
        </authorList>
    </citation>
    <scope>INTERACTION WITH SPSB1; SPSB2 AND SPSB4</scope>
</reference>
<reference key="9">
    <citation type="journal article" date="2010" name="Cell">
        <title>A tissue-specific atlas of mouse protein phosphorylation and expression.</title>
        <authorList>
            <person name="Huttlin E.L."/>
            <person name="Jedrychowski M.P."/>
            <person name="Elias J.E."/>
            <person name="Goswami T."/>
            <person name="Rad R."/>
            <person name="Beausoleil S.A."/>
            <person name="Villen J."/>
            <person name="Haas W."/>
            <person name="Sowa M.E."/>
            <person name="Gygi S.P."/>
        </authorList>
    </citation>
    <scope>IDENTIFICATION BY MASS SPECTROMETRY [LARGE SCALE ANALYSIS]</scope>
    <source>
        <tissue>Kidney</tissue>
        <tissue>Liver</tissue>
    </source>
</reference>
<reference key="10">
    <citation type="journal article" date="2015" name="Am. J. Hum. Genet.">
        <title>Mutations preventing regulated exon skipping in MET cause osteofibrous dysplasia.</title>
        <authorList>
            <person name="Gray M.J."/>
            <person name="Kannu P."/>
            <person name="Sharma S."/>
            <person name="Neyt C."/>
            <person name="Zhang D."/>
            <person name="Paria N."/>
            <person name="Daniel P.B."/>
            <person name="Whetstone H."/>
            <person name="Sprenger H.G."/>
            <person name="Hammerschmidt P."/>
            <person name="Weng A."/>
            <person name="Dupuis L."/>
            <person name="Jobling R."/>
            <person name="Mendoza-Londono R."/>
            <person name="Dray M."/>
            <person name="Su P."/>
            <person name="Wilson M.J."/>
            <person name="Kapur R.P."/>
            <person name="McCarthy E.F."/>
            <person name="Alman B.A."/>
            <person name="Howard A."/>
            <person name="Somers G.R."/>
            <person name="Marshall C.R."/>
            <person name="Manners S."/>
            <person name="Flanagan A.M."/>
            <person name="Rathjen K.E."/>
            <person name="Karol L.A."/>
            <person name="Crawford H."/>
            <person name="Markie D.M."/>
            <person name="Rios J.J."/>
            <person name="Wise C.A."/>
            <person name="Robertson S.P."/>
        </authorList>
    </citation>
    <scope>FUNCTION</scope>
    <scope>DEVELOPMENTAL STAGE</scope>
</reference>
<reference key="11">
    <citation type="journal article" date="2019" name="EMBO Mol. Med.">
        <title>MET mutation causes muscular dysplasia and arthrogryposis.</title>
        <authorList>
            <person name="Zhou H."/>
            <person name="Lian C."/>
            <person name="Wang T."/>
            <person name="Yang X."/>
            <person name="Xu C."/>
            <person name="Su D."/>
            <person name="Zheng S."/>
            <person name="Huang X."/>
            <person name="Liao Z."/>
            <person name="Zhou T."/>
            <person name="Qiu X."/>
            <person name="Chen Y."/>
            <person name="Gao B."/>
            <person name="Li Y."/>
            <person name="Wang X."/>
            <person name="You G."/>
            <person name="Fu Q."/>
            <person name="Gurnett C."/>
            <person name="Huang D."/>
            <person name="Su P."/>
        </authorList>
    </citation>
    <scope>MUTAGENESIS OF TYR-1232</scope>
    <scope>FUNCTION</scope>
</reference>
<name>MET_MOUSE</name>
<comment type="function">
    <text evidence="1 11 12 13">Receptor tyrosine kinase that transduces signals from the extracellular matrix into the cytoplasm by binding to hepatocyte growth factor/HGF ligand. Regulates many physiological processes including proliferation, scattering, morphogenesis and survival. Ligand binding at the cell surface induces autophosphorylation of MET on its intracellular domain that provides docking sites for downstream signaling molecules. Following activation by ligand, interacts with the PI3-kinase subunit PIK3R1, PLCG1, SRC, GRB2, STAT3 or the adapter GAB1. Recruitment of these downstream effectors by MET leads to the activation of several signaling cascades including the RAS-ERK, PI3 kinase-AKT, or PLCgamma-PKC. The RAS-ERK activation is associated with the morphogenetic effects while PI3K/AKT coordinates prosurvival effects. During embryonic development, MET signaling plays a role in gastrulation, development and migration of neuronal precursors, angiogenesis and kidney formation. During skeletal muscle development, it is crucial for the migration of muscle progenitor cells and for the proliferation of secondary myoblasts (PubMed:30777867). In adults, participates in wound healing as well as organ regeneration and tissue remodeling. Also promotes differentiation and proliferation of hematopoietic cells (By similarity). May regulate cortical bone osteogenesis (PubMed:26637977).</text>
</comment>
<comment type="function">
    <text evidence="15">(Microbial infection) Acts as a receptor for Listeria monocytogenes internalin InlB, mediating entry of the pathogen into cells.</text>
</comment>
<comment type="catalytic activity">
    <reaction evidence="6">
        <text>L-tyrosyl-[protein] + ATP = O-phospho-L-tyrosyl-[protein] + ADP + H(+)</text>
        <dbReference type="Rhea" id="RHEA:10596"/>
        <dbReference type="Rhea" id="RHEA-COMP:10136"/>
        <dbReference type="Rhea" id="RHEA-COMP:20101"/>
        <dbReference type="ChEBI" id="CHEBI:15378"/>
        <dbReference type="ChEBI" id="CHEBI:30616"/>
        <dbReference type="ChEBI" id="CHEBI:46858"/>
        <dbReference type="ChEBI" id="CHEBI:61978"/>
        <dbReference type="ChEBI" id="CHEBI:456216"/>
        <dbReference type="EC" id="2.7.10.1"/>
    </reaction>
</comment>
<comment type="activity regulation">
    <text evidence="1">In its inactive state, the C-terminal tail interacts with the catalytic domain and inhibits the kinase activity. Upon ligand binding, the C-terminal tail is displaced and becomes phosphorylated, thus increasing the kinase activity (By similarity).</text>
</comment>
<comment type="subunit">
    <text evidence="2 8 9 10">Heterodimer made of an alpha chain (50 kDa) and a beta chain (145 kDa) which are disulfide linked (By similarity). Binds PLXNB1 (By similarity). Interacts when phosphorylated with downstream effectors including STAT3, PIK3R1, SRC, PCLG1, GRB2 and GAB1 (By similarity). When phosphorylated at Tyr-1354, interacts with INPPL1/SHIP2 (By similarity). Interacts with RANBP9 and RANBP10 (By similarity). Interacts with INPP5D/SHIP1 (PubMed:11896575). Interacts with SPSB1, SPSB2, SPSB4 and probably SPSB3. SPSB1 binding occurs in the presence and in the absence of HGF, however HGF treatment has a positive effect on this interaction (PubMed:16369487). Interacts with MUC20; prevents interaction with GRB2 and suppresses hepatocyte growth factor-induced cell proliferation (PubMed:15314156). Interacts with GRB10 (By similarity). Interacts with PTPN1 and PTPN2. Interacts with HSP90AA1 and HSP90AB1; the interaction suppresses MET kinase activity (By similarity). Interacts with tensin TNS3 (By similarity). Interacts (when phosphorylated) with tensin TNS4 (via SH2 domain); the interaction increases MET protein stability by inhibiting MET endocytosis and subsequent lysosomal degradation (By similarity).</text>
</comment>
<comment type="subunit">
    <text evidence="14 15">(Microbial infection) Interacts with L.monocytogenes InlB (Probable). InlB probably dimerizes upon binding to MET, which encourages subsequent dimerization of MET (Probable).</text>
</comment>
<comment type="interaction">
    <interactant intactId="EBI-1798780">
        <id>P16056</id>
    </interactant>
    <interactant intactId="EBI-640919">
        <id>P22682</id>
        <label>Cbl</label>
    </interactant>
    <organismsDiffer>false</organismsDiffer>
    <experiments>2</experiments>
</comment>
<comment type="interaction">
    <interactant intactId="EBI-1798780">
        <id>P16056</id>
    </interactant>
    <interactant intactId="EBI-8795045">
        <id>Q3UVX5</id>
        <label>Grm5</label>
    </interactant>
    <organismsDiffer>false</organismsDiffer>
    <experiments>3</experiments>
</comment>
<comment type="interaction">
    <interactant intactId="EBI-1798780">
        <id>P16056</id>
    </interactant>
    <interactant intactId="EBI-1555005">
        <id>P35918</id>
        <label>Kdr</label>
    </interactant>
    <organismsDiffer>false</organismsDiffer>
    <experiments>3</experiments>
</comment>
<comment type="interaction">
    <interactant intactId="EBI-1798780">
        <id>P16056</id>
    </interactant>
    <interactant intactId="EBI-16744951">
        <id>Q6VNS1</id>
        <label>Ntrk3</label>
    </interactant>
    <organismsDiffer>false</organismsDiffer>
    <experiments>5</experiments>
</comment>
<comment type="interaction">
    <interactant intactId="EBI-1798780">
        <id>P16056</id>
    </interactant>
    <interactant intactId="EBI-5797569">
        <id>F6SEU4</id>
        <label>Syngap1</label>
    </interactant>
    <organismsDiffer>false</organismsDiffer>
    <experiments>3</experiments>
</comment>
<comment type="interaction">
    <interactant intactId="EBI-1798780">
        <id>P16056</id>
    </interactant>
    <interactant intactId="EBI-1039104">
        <id>P14210</id>
        <label>HGF</label>
    </interactant>
    <organismsDiffer>true</organismsDiffer>
    <experiments>2</experiments>
</comment>
<comment type="subcellular location">
    <subcellularLocation>
        <location>Membrane</location>
        <topology>Single-pass type I membrane protein</topology>
    </subcellularLocation>
</comment>
<comment type="developmental stage">
    <text evidence="11">Low though detectable expression at 10 dpc. From 15 dpc at least until 17 dpc, expression strongly increases. Down-regulated in the adult.</text>
</comment>
<comment type="domain">
    <text evidence="1">The kinase domain is involved in SPSB1 binding.</text>
</comment>
<comment type="domain">
    <text evidence="1">The beta-propeller Sema domain mediates binding to HGF.</text>
</comment>
<comment type="PTM">
    <text evidence="1">Autophosphorylated in response to ligand binding on Tyr-1232 and Tyr-1233 in the kinase domain leading to further phosphorylation of Tyr-1347 and Tyr-1354 in the C-terminal multifunctional docking site. Dephosphorylated by PTPRJ at Tyr-1347 and Tyr-1363 (By similarity). Dephosphorylated by PTPN1 and PTPN2 (By similarity).</text>
</comment>
<comment type="PTM">
    <text evidence="2">Ubiquitinated. Ubiquitination by CBL regulates MET endocytosis, resulting in decreasing plasma membrane receptor abundance, and in endosomal degradation and/or recycling of internalized receptors.</text>
</comment>
<comment type="PTM">
    <text evidence="2">O-mannosylation of IPT/TIG domains by TMEM260 is required for protein maturation. O-mannosylated residues are composed of single mannose glycans that are not elongated or modified.</text>
</comment>
<comment type="PTM">
    <text evidence="7">(Microbial infection) Tyrosine phosphorylation is stimulated by L.monocytogenes InlB.</text>
</comment>
<comment type="disease">
    <text>Activation of Met after rearrangement with the TPR (translocated promoter) locus of chromosome 1 produces an oncogenic protein.</text>
</comment>
<comment type="similarity">
    <text evidence="4">Belongs to the protein kinase superfamily. Tyr protein kinase family.</text>
</comment>
<gene>
    <name type="primary">Met</name>
</gene>
<accession>P16056</accession>
<accession>Q62125</accession>
<evidence type="ECO:0000250" key="1"/>
<evidence type="ECO:0000250" key="2">
    <source>
        <dbReference type="UniProtKB" id="P08581"/>
    </source>
</evidence>
<evidence type="ECO:0000255" key="3"/>
<evidence type="ECO:0000255" key="4">
    <source>
        <dbReference type="PROSITE-ProRule" id="PRU00159"/>
    </source>
</evidence>
<evidence type="ECO:0000255" key="5">
    <source>
        <dbReference type="PROSITE-ProRule" id="PRU00352"/>
    </source>
</evidence>
<evidence type="ECO:0000255" key="6">
    <source>
        <dbReference type="PROSITE-ProRule" id="PRU10028"/>
    </source>
</evidence>
<evidence type="ECO:0000269" key="7">
    <source>
    </source>
</evidence>
<evidence type="ECO:0000269" key="8">
    <source>
    </source>
</evidence>
<evidence type="ECO:0000269" key="9">
    <source>
    </source>
</evidence>
<evidence type="ECO:0000269" key="10">
    <source>
    </source>
</evidence>
<evidence type="ECO:0000269" key="11">
    <source>
    </source>
</evidence>
<evidence type="ECO:0000269" key="12">
    <source>
    </source>
</evidence>
<evidence type="ECO:0000269" key="13">
    <source>
    </source>
</evidence>
<evidence type="ECO:0000305" key="14"/>
<evidence type="ECO:0000305" key="15">
    <source>
    </source>
</evidence>
<proteinExistence type="evidence at protein level"/>
<feature type="signal peptide" evidence="3">
    <location>
        <begin position="1"/>
        <end position="24"/>
    </location>
</feature>
<feature type="chain" id="PRO_0000024441" description="Hepatocyte growth factor receptor">
    <location>
        <begin position="25"/>
        <end position="1379"/>
    </location>
</feature>
<feature type="topological domain" description="Extracellular" evidence="3">
    <location>
        <begin position="25"/>
        <end position="931"/>
    </location>
</feature>
<feature type="transmembrane region" description="Helical" evidence="3">
    <location>
        <begin position="932"/>
        <end position="954"/>
    </location>
</feature>
<feature type="topological domain" description="Cytoplasmic" evidence="3">
    <location>
        <begin position="955"/>
        <end position="1379"/>
    </location>
</feature>
<feature type="domain" description="Sema" evidence="5">
    <location>
        <begin position="27"/>
        <end position="514"/>
    </location>
</feature>
<feature type="domain" description="IPT/TIG 1">
    <location>
        <begin position="562"/>
        <end position="654"/>
    </location>
</feature>
<feature type="domain" description="IPT/TIG 2">
    <location>
        <begin position="656"/>
        <end position="738"/>
    </location>
</feature>
<feature type="domain" description="IPT/TIG 3">
    <location>
        <begin position="741"/>
        <end position="835"/>
    </location>
</feature>
<feature type="domain" description="Protein kinase" evidence="4">
    <location>
        <begin position="1076"/>
        <end position="1343"/>
    </location>
</feature>
<feature type="region of interest" description="Interaction with RANBP9" evidence="1">
    <location>
        <begin position="1210"/>
        <end position="1379"/>
    </location>
</feature>
<feature type="region of interest" description="Interaction with MUC20" evidence="1">
    <location>
        <begin position="1318"/>
        <end position="1357"/>
    </location>
</feature>
<feature type="active site" description="Proton acceptor" evidence="4 6">
    <location>
        <position position="1202"/>
    </location>
</feature>
<feature type="binding site" evidence="4">
    <location>
        <begin position="1082"/>
        <end position="1090"/>
    </location>
    <ligand>
        <name>ATP</name>
        <dbReference type="ChEBI" id="CHEBI:30616"/>
    </ligand>
</feature>
<feature type="binding site" evidence="4">
    <location>
        <position position="1108"/>
    </location>
    <ligand>
        <name>ATP</name>
        <dbReference type="ChEBI" id="CHEBI:30616"/>
    </ligand>
</feature>
<feature type="site" description="Cleavage" evidence="3">
    <location>
        <begin position="306"/>
        <end position="307"/>
    </location>
</feature>
<feature type="site" description="Required for ligand-induced CBL-mediated ubiquitination" evidence="2">
    <location>
        <position position="1001"/>
    </location>
</feature>
<feature type="modified residue" description="Phosphoserine" evidence="2">
    <location>
        <position position="964"/>
    </location>
</feature>
<feature type="modified residue" description="Phosphothreonine" evidence="2">
    <location>
        <position position="975"/>
    </location>
</feature>
<feature type="modified residue" description="Phosphoserine" evidence="2">
    <location>
        <position position="988"/>
    </location>
</feature>
<feature type="modified residue" description="Phosphoserine" evidence="2">
    <location>
        <position position="995"/>
    </location>
</feature>
<feature type="modified residue" description="Phosphoserine" evidence="2">
    <location>
        <position position="998"/>
    </location>
</feature>
<feature type="modified residue" description="Phosphotyrosine" evidence="2">
    <location>
        <position position="1001"/>
    </location>
</feature>
<feature type="modified residue" description="Phosphotyrosine" evidence="2">
    <location>
        <position position="1228"/>
    </location>
</feature>
<feature type="modified residue" description="Phosphotyrosine; by autocatalysis" evidence="2">
    <location>
        <position position="1232"/>
    </location>
</feature>
<feature type="modified residue" description="Phosphotyrosine; by autocatalysis" evidence="2">
    <location>
        <position position="1233"/>
    </location>
</feature>
<feature type="modified residue" description="Phosphothreonine" evidence="2">
    <location>
        <position position="1287"/>
    </location>
</feature>
<feature type="modified residue" description="Phosphotyrosine; by autocatalysis" evidence="2">
    <location>
        <position position="1347"/>
    </location>
</feature>
<feature type="modified residue" description="Phosphotyrosine; by autocatalysis" evidence="2">
    <location>
        <position position="1354"/>
    </location>
</feature>
<feature type="modified residue" description="Phosphotyrosine" evidence="2">
    <location>
        <position position="1363"/>
    </location>
</feature>
<feature type="glycosylation site" description="N-linked (GlcNAc...) asparagine" evidence="3">
    <location>
        <position position="45"/>
    </location>
</feature>
<feature type="glycosylation site" description="N-linked (GlcNAc...) asparagine" evidence="3">
    <location>
        <position position="106"/>
    </location>
</feature>
<feature type="glycosylation site" description="N-linked (GlcNAc...) asparagine" evidence="3">
    <location>
        <position position="201"/>
    </location>
</feature>
<feature type="glycosylation site" description="N-linked (GlcNAc...) asparagine" evidence="3">
    <location>
        <position position="357"/>
    </location>
</feature>
<feature type="glycosylation site" description="N-linked (GlcNAc...) asparagine" evidence="3">
    <location>
        <position position="398"/>
    </location>
</feature>
<feature type="glycosylation site" description="N-linked (GlcNAc...) asparagine" evidence="3">
    <location>
        <position position="404"/>
    </location>
</feature>
<feature type="glycosylation site" description="O-linked (Man) threonine" evidence="2">
    <location>
        <position position="581"/>
    </location>
</feature>
<feature type="glycosylation site" description="N-linked (GlcNAc...) asparagine" evidence="3">
    <location>
        <position position="606"/>
    </location>
</feature>
<feature type="glycosylation site" description="N-linked (GlcNAc...) asparagine" evidence="3">
    <location>
        <position position="634"/>
    </location>
</feature>
<feature type="glycosylation site" description="O-linked (Man) threonine" evidence="2">
    <location>
        <position position="675"/>
    </location>
</feature>
<feature type="glycosylation site" description="O-linked (Man) threonine" evidence="2">
    <location>
        <position position="760"/>
    </location>
</feature>
<feature type="glycosylation site" description="N-linked (GlcNAc...) asparagine" evidence="3">
    <location>
        <position position="784"/>
    </location>
</feature>
<feature type="glycosylation site" description="N-linked (GlcNAc...) asparagine" evidence="3">
    <location>
        <position position="878"/>
    </location>
</feature>
<feature type="disulfide bond" evidence="5">
    <location>
        <begin position="95"/>
        <end position="101"/>
    </location>
</feature>
<feature type="disulfide bond" evidence="5">
    <location>
        <begin position="98"/>
        <end position="160"/>
    </location>
</feature>
<feature type="disulfide bond" evidence="5">
    <location>
        <begin position="133"/>
        <end position="141"/>
    </location>
</feature>
<feature type="disulfide bond" evidence="5">
    <location>
        <begin position="171"/>
        <end position="174"/>
    </location>
</feature>
<feature type="disulfide bond" evidence="5">
    <location>
        <begin position="297"/>
        <end position="362"/>
    </location>
</feature>
<feature type="disulfide bond" evidence="5">
    <location>
        <begin position="384"/>
        <end position="396"/>
    </location>
</feature>
<feature type="disulfide bond" evidence="5">
    <location>
        <begin position="519"/>
        <end position="537"/>
    </location>
</feature>
<feature type="disulfide bond" evidence="5">
    <location>
        <begin position="525"/>
        <end position="560"/>
    </location>
</feature>
<feature type="disulfide bond" evidence="5">
    <location>
        <begin position="528"/>
        <end position="544"/>
    </location>
</feature>
<feature type="disulfide bond" evidence="5">
    <location>
        <begin position="540"/>
        <end position="550"/>
    </location>
</feature>
<feature type="mutagenesis site" description="Mice heterozygous for the mutation show reduced number of myofibers in appendicular and axial muscles, defective migration of muscle progenitor cells and impaired proliferation of secondary myoblasts." evidence="12">
    <original>Y</original>
    <variation>C</variation>
    <location>
        <position position="1232"/>
    </location>
</feature>
<feature type="sequence conflict" description="In Ref. 2; AAA40015." evidence="14" ref="2">
    <original>V</original>
    <variation>I</variation>
    <location>
        <position position="1199"/>
    </location>
</feature>
<feature type="sequence conflict" description="In Ref. 2; AAA40015." evidence="14" ref="2">
    <original>T</original>
    <variation>R</variation>
    <location>
        <position position="1255"/>
    </location>
</feature>
<feature type="sequence conflict" description="In Ref. 2; AAA40015." evidence="14" ref="2">
    <original>K</original>
    <variation>T</variation>
    <location>
        <position position="1261"/>
    </location>
</feature>
<feature type="sequence conflict" description="In Ref. 2; AAA40015." evidence="14" ref="2">
    <original>VL</original>
    <variation>IP</variation>
    <location>
        <begin position="1269"/>
        <end position="1270"/>
    </location>
</feature>
<protein>
    <recommendedName>
        <fullName>Hepatocyte growth factor receptor</fullName>
        <shortName>HGF receptor</shortName>
        <ecNumber>2.7.10.1</ecNumber>
    </recommendedName>
    <alternativeName>
        <fullName>HGF/SF receptor</fullName>
    </alternativeName>
    <alternativeName>
        <fullName>Proto-oncogene c-Met</fullName>
    </alternativeName>
    <alternativeName>
        <fullName>Scatter factor receptor</fullName>
        <shortName>SF receptor</shortName>
    </alternativeName>
    <alternativeName>
        <fullName>Tyrosine-protein kinase Met</fullName>
    </alternativeName>
</protein>
<keyword id="KW-0067">ATP-binding</keyword>
<keyword id="KW-1015">Disulfide bond</keyword>
<keyword id="KW-0325">Glycoprotein</keyword>
<keyword id="KW-0418">Kinase</keyword>
<keyword id="KW-0472">Membrane</keyword>
<keyword id="KW-0547">Nucleotide-binding</keyword>
<keyword id="KW-0597">Phosphoprotein</keyword>
<keyword id="KW-0656">Proto-oncogene</keyword>
<keyword id="KW-0675">Receptor</keyword>
<keyword id="KW-1185">Reference proteome</keyword>
<keyword id="KW-0677">Repeat</keyword>
<keyword id="KW-0732">Signal</keyword>
<keyword id="KW-0808">Transferase</keyword>
<keyword id="KW-0812">Transmembrane</keyword>
<keyword id="KW-1133">Transmembrane helix</keyword>
<keyword id="KW-0829">Tyrosine-protein kinase</keyword>
<keyword id="KW-0832">Ubl conjugation</keyword>